<sequence>MALDSAIKLEIISKFARGEKDTGSPEVQVALLSRRISDLTEHLKVNVKDHASRLGLLKLVAQRKHLLKYLKKTDYAKYSELISTLGIRDR</sequence>
<organism>
    <name type="scientific">Wolinella succinogenes (strain ATCC 29543 / DSM 1740 / CCUG 13145 / JCM 31913 / LMG 7466 / NCTC 11488 / FDC 602W)</name>
    <name type="common">Vibrio succinogenes</name>
    <dbReference type="NCBI Taxonomy" id="273121"/>
    <lineage>
        <taxon>Bacteria</taxon>
        <taxon>Pseudomonadati</taxon>
        <taxon>Campylobacterota</taxon>
        <taxon>Epsilonproteobacteria</taxon>
        <taxon>Campylobacterales</taxon>
        <taxon>Helicobacteraceae</taxon>
        <taxon>Wolinella</taxon>
    </lineage>
</organism>
<reference key="1">
    <citation type="journal article" date="2003" name="Proc. Natl. Acad. Sci. U.S.A.">
        <title>Complete genome sequence and analysis of Wolinella succinogenes.</title>
        <authorList>
            <person name="Baar C."/>
            <person name="Eppinger M."/>
            <person name="Raddatz G."/>
            <person name="Simon J."/>
            <person name="Lanz C."/>
            <person name="Klimmek O."/>
            <person name="Nandakumar R."/>
            <person name="Gross R."/>
            <person name="Rosinus A."/>
            <person name="Keller H."/>
            <person name="Jagtap P."/>
            <person name="Linke B."/>
            <person name="Meyer F."/>
            <person name="Lederer H."/>
            <person name="Schuster S.C."/>
        </authorList>
    </citation>
    <scope>NUCLEOTIDE SEQUENCE [LARGE SCALE GENOMIC DNA]</scope>
    <source>
        <strain>ATCC 29543 / DSM 1740 / CCUG 13145 / JCM 31913 / LMG 7466 / NCTC 11488 / FDC 602W</strain>
    </source>
</reference>
<accession>Q7M9B0</accession>
<dbReference type="EMBL" id="BX571659">
    <property type="protein sequence ID" value="CAE10153.1"/>
    <property type="molecule type" value="Genomic_DNA"/>
</dbReference>
<dbReference type="RefSeq" id="WP_011138946.1">
    <property type="nucleotide sequence ID" value="NC_005090.1"/>
</dbReference>
<dbReference type="SMR" id="Q7M9B0"/>
<dbReference type="STRING" id="273121.WS1054"/>
<dbReference type="KEGG" id="wsu:WS1054"/>
<dbReference type="eggNOG" id="COG0184">
    <property type="taxonomic scope" value="Bacteria"/>
</dbReference>
<dbReference type="HOGENOM" id="CLU_148518_0_0_7"/>
<dbReference type="Proteomes" id="UP000000422">
    <property type="component" value="Chromosome"/>
</dbReference>
<dbReference type="GO" id="GO:0022627">
    <property type="term" value="C:cytosolic small ribosomal subunit"/>
    <property type="evidence" value="ECO:0007669"/>
    <property type="project" value="TreeGrafter"/>
</dbReference>
<dbReference type="GO" id="GO:0019843">
    <property type="term" value="F:rRNA binding"/>
    <property type="evidence" value="ECO:0007669"/>
    <property type="project" value="UniProtKB-UniRule"/>
</dbReference>
<dbReference type="GO" id="GO:0003735">
    <property type="term" value="F:structural constituent of ribosome"/>
    <property type="evidence" value="ECO:0007669"/>
    <property type="project" value="InterPro"/>
</dbReference>
<dbReference type="GO" id="GO:0006412">
    <property type="term" value="P:translation"/>
    <property type="evidence" value="ECO:0007669"/>
    <property type="project" value="UniProtKB-UniRule"/>
</dbReference>
<dbReference type="CDD" id="cd00353">
    <property type="entry name" value="Ribosomal_S15p_S13e"/>
    <property type="match status" value="1"/>
</dbReference>
<dbReference type="FunFam" id="1.10.287.10:FF:000002">
    <property type="entry name" value="30S ribosomal protein S15"/>
    <property type="match status" value="1"/>
</dbReference>
<dbReference type="Gene3D" id="6.10.250.3130">
    <property type="match status" value="1"/>
</dbReference>
<dbReference type="Gene3D" id="1.10.287.10">
    <property type="entry name" value="S15/NS1, RNA-binding"/>
    <property type="match status" value="1"/>
</dbReference>
<dbReference type="HAMAP" id="MF_01343_B">
    <property type="entry name" value="Ribosomal_uS15_B"/>
    <property type="match status" value="1"/>
</dbReference>
<dbReference type="InterPro" id="IPR000589">
    <property type="entry name" value="Ribosomal_uS15"/>
</dbReference>
<dbReference type="InterPro" id="IPR005290">
    <property type="entry name" value="Ribosomal_uS15_bac-type"/>
</dbReference>
<dbReference type="InterPro" id="IPR009068">
    <property type="entry name" value="uS15_NS1_RNA-bd_sf"/>
</dbReference>
<dbReference type="NCBIfam" id="TIGR00952">
    <property type="entry name" value="S15_bact"/>
    <property type="match status" value="1"/>
</dbReference>
<dbReference type="PANTHER" id="PTHR23321">
    <property type="entry name" value="RIBOSOMAL PROTEIN S15, BACTERIAL AND ORGANELLAR"/>
    <property type="match status" value="1"/>
</dbReference>
<dbReference type="PANTHER" id="PTHR23321:SF26">
    <property type="entry name" value="SMALL RIBOSOMAL SUBUNIT PROTEIN US15M"/>
    <property type="match status" value="1"/>
</dbReference>
<dbReference type="Pfam" id="PF00312">
    <property type="entry name" value="Ribosomal_S15"/>
    <property type="match status" value="1"/>
</dbReference>
<dbReference type="SMART" id="SM01387">
    <property type="entry name" value="Ribosomal_S15"/>
    <property type="match status" value="1"/>
</dbReference>
<dbReference type="SUPFAM" id="SSF47060">
    <property type="entry name" value="S15/NS1 RNA-binding domain"/>
    <property type="match status" value="1"/>
</dbReference>
<dbReference type="PROSITE" id="PS00362">
    <property type="entry name" value="RIBOSOMAL_S15"/>
    <property type="match status" value="1"/>
</dbReference>
<name>RS15_WOLSU</name>
<feature type="chain" id="PRO_0000115589" description="Small ribosomal subunit protein uS15">
    <location>
        <begin position="1"/>
        <end position="90"/>
    </location>
</feature>
<protein>
    <recommendedName>
        <fullName evidence="1">Small ribosomal subunit protein uS15</fullName>
    </recommendedName>
    <alternativeName>
        <fullName evidence="2">30S ribosomal protein S15</fullName>
    </alternativeName>
</protein>
<evidence type="ECO:0000255" key="1">
    <source>
        <dbReference type="HAMAP-Rule" id="MF_01343"/>
    </source>
</evidence>
<evidence type="ECO:0000305" key="2"/>
<comment type="function">
    <text evidence="1">One of the primary rRNA binding proteins, it binds directly to 16S rRNA where it helps nucleate assembly of the platform of the 30S subunit by binding and bridging several RNA helices of the 16S rRNA.</text>
</comment>
<comment type="function">
    <text evidence="1">Forms an intersubunit bridge (bridge B4) with the 23S rRNA of the 50S subunit in the ribosome.</text>
</comment>
<comment type="subunit">
    <text evidence="1">Part of the 30S ribosomal subunit. Forms a bridge to the 50S subunit in the 70S ribosome, contacting the 23S rRNA.</text>
</comment>
<comment type="similarity">
    <text evidence="1">Belongs to the universal ribosomal protein uS15 family.</text>
</comment>
<gene>
    <name evidence="1" type="primary">rpsO</name>
    <name type="ordered locus">WS1054</name>
</gene>
<proteinExistence type="inferred from homology"/>
<keyword id="KW-1185">Reference proteome</keyword>
<keyword id="KW-0687">Ribonucleoprotein</keyword>
<keyword id="KW-0689">Ribosomal protein</keyword>
<keyword id="KW-0694">RNA-binding</keyword>
<keyword id="KW-0699">rRNA-binding</keyword>